<protein>
    <recommendedName>
        <fullName evidence="1">DNA replication and repair protein RecF</fullName>
    </recommendedName>
</protein>
<comment type="function">
    <text evidence="1">The RecF protein is involved in DNA metabolism; it is required for DNA replication and normal SOS inducibility. RecF binds preferentially to single-stranded, linear DNA. It also seems to bind ATP.</text>
</comment>
<comment type="subcellular location">
    <subcellularLocation>
        <location evidence="1">Cytoplasm</location>
    </subcellularLocation>
</comment>
<comment type="similarity">
    <text evidence="1">Belongs to the RecF family.</text>
</comment>
<reference key="1">
    <citation type="submission" date="2008-06" db="EMBL/GenBank/DDBJ databases">
        <title>Complete sequence of chromosome of Prosthecochloris aestuarii DSM 271.</title>
        <authorList>
            <consortium name="US DOE Joint Genome Institute"/>
            <person name="Lucas S."/>
            <person name="Copeland A."/>
            <person name="Lapidus A."/>
            <person name="Glavina del Rio T."/>
            <person name="Dalin E."/>
            <person name="Tice H."/>
            <person name="Bruce D."/>
            <person name="Goodwin L."/>
            <person name="Pitluck S."/>
            <person name="Schmutz J."/>
            <person name="Larimer F."/>
            <person name="Land M."/>
            <person name="Hauser L."/>
            <person name="Kyrpides N."/>
            <person name="Anderson I."/>
            <person name="Liu Z."/>
            <person name="Li T."/>
            <person name="Zhao F."/>
            <person name="Overmann J."/>
            <person name="Bryant D.A."/>
            <person name="Richardson P."/>
        </authorList>
    </citation>
    <scope>NUCLEOTIDE SEQUENCE [LARGE SCALE GENOMIC DNA]</scope>
    <source>
        <strain>DSM 271 / SK 413</strain>
    </source>
</reference>
<dbReference type="EMBL" id="CP001108">
    <property type="protein sequence ID" value="ACF45069.1"/>
    <property type="molecule type" value="Genomic_DNA"/>
</dbReference>
<dbReference type="RefSeq" id="WP_012504606.1">
    <property type="nucleotide sequence ID" value="NC_011059.1"/>
</dbReference>
<dbReference type="SMR" id="B4S937"/>
<dbReference type="STRING" id="290512.Paes_0003"/>
<dbReference type="KEGG" id="paa:Paes_0003"/>
<dbReference type="eggNOG" id="COG1195">
    <property type="taxonomic scope" value="Bacteria"/>
</dbReference>
<dbReference type="HOGENOM" id="CLU_040267_0_1_10"/>
<dbReference type="Proteomes" id="UP000002725">
    <property type="component" value="Chromosome"/>
</dbReference>
<dbReference type="GO" id="GO:0005737">
    <property type="term" value="C:cytoplasm"/>
    <property type="evidence" value="ECO:0007669"/>
    <property type="project" value="UniProtKB-SubCell"/>
</dbReference>
<dbReference type="GO" id="GO:0005524">
    <property type="term" value="F:ATP binding"/>
    <property type="evidence" value="ECO:0007669"/>
    <property type="project" value="UniProtKB-UniRule"/>
</dbReference>
<dbReference type="GO" id="GO:0003697">
    <property type="term" value="F:single-stranded DNA binding"/>
    <property type="evidence" value="ECO:0007669"/>
    <property type="project" value="UniProtKB-UniRule"/>
</dbReference>
<dbReference type="GO" id="GO:0006260">
    <property type="term" value="P:DNA replication"/>
    <property type="evidence" value="ECO:0007669"/>
    <property type="project" value="UniProtKB-UniRule"/>
</dbReference>
<dbReference type="GO" id="GO:0000731">
    <property type="term" value="P:DNA synthesis involved in DNA repair"/>
    <property type="evidence" value="ECO:0007669"/>
    <property type="project" value="TreeGrafter"/>
</dbReference>
<dbReference type="GO" id="GO:0006302">
    <property type="term" value="P:double-strand break repair"/>
    <property type="evidence" value="ECO:0007669"/>
    <property type="project" value="TreeGrafter"/>
</dbReference>
<dbReference type="GO" id="GO:0009432">
    <property type="term" value="P:SOS response"/>
    <property type="evidence" value="ECO:0007669"/>
    <property type="project" value="UniProtKB-UniRule"/>
</dbReference>
<dbReference type="Gene3D" id="3.40.50.300">
    <property type="entry name" value="P-loop containing nucleotide triphosphate hydrolases"/>
    <property type="match status" value="1"/>
</dbReference>
<dbReference type="Gene3D" id="1.20.1050.90">
    <property type="entry name" value="RecF/RecN/SMC, N-terminal domain"/>
    <property type="match status" value="1"/>
</dbReference>
<dbReference type="HAMAP" id="MF_00365">
    <property type="entry name" value="RecF"/>
    <property type="match status" value="1"/>
</dbReference>
<dbReference type="InterPro" id="IPR001238">
    <property type="entry name" value="DNA-binding_RecF"/>
</dbReference>
<dbReference type="InterPro" id="IPR018078">
    <property type="entry name" value="DNA-binding_RecF_CS"/>
</dbReference>
<dbReference type="InterPro" id="IPR027417">
    <property type="entry name" value="P-loop_NTPase"/>
</dbReference>
<dbReference type="InterPro" id="IPR003395">
    <property type="entry name" value="RecF/RecN/SMC_N"/>
</dbReference>
<dbReference type="InterPro" id="IPR042174">
    <property type="entry name" value="RecF_2"/>
</dbReference>
<dbReference type="NCBIfam" id="TIGR00611">
    <property type="entry name" value="recf"/>
    <property type="match status" value="1"/>
</dbReference>
<dbReference type="PANTHER" id="PTHR32182">
    <property type="entry name" value="DNA REPLICATION AND REPAIR PROTEIN RECF"/>
    <property type="match status" value="1"/>
</dbReference>
<dbReference type="PANTHER" id="PTHR32182:SF0">
    <property type="entry name" value="DNA REPLICATION AND REPAIR PROTEIN RECF"/>
    <property type="match status" value="1"/>
</dbReference>
<dbReference type="Pfam" id="PF02463">
    <property type="entry name" value="SMC_N"/>
    <property type="match status" value="1"/>
</dbReference>
<dbReference type="SUPFAM" id="SSF52540">
    <property type="entry name" value="P-loop containing nucleoside triphosphate hydrolases"/>
    <property type="match status" value="1"/>
</dbReference>
<dbReference type="PROSITE" id="PS00617">
    <property type="entry name" value="RECF_1"/>
    <property type="match status" value="1"/>
</dbReference>
<dbReference type="PROSITE" id="PS00618">
    <property type="entry name" value="RECF_2"/>
    <property type="match status" value="1"/>
</dbReference>
<sequence>MRLDEIKIQNFRKHSELIFSPSEGINLIFGPNGSGKTNILEAIHYCALTKGFNRTTDRQCMNFSAESFLLKSLFTSDTGCQYRVHVDFSTNGGKSISLNNSQLEKFSALIGLIPCILFSPAEITIVHGSPQERRRFLDNALCQISKSYLEQLLQYRRILQQRNALLHSSWDRSSPAPDMNIWTELLAESGAFIIKERMDFLDEFQPYFSNAYAILDTGEIPRLTYRSSLGKALVSSDRAGIADSLMHRFGEIQHQEQVRKQTLLGPHRDEILFYLDGSDVKKYASQGQTRTFLIALKVALQRFLFDKKGEQSIFLLDDIFSELDQRRVERVLEMIAGFGQSLITSTEKTGLSFLHEISIHDMLYKHGDPL</sequence>
<keyword id="KW-0067">ATP-binding</keyword>
<keyword id="KW-0963">Cytoplasm</keyword>
<keyword id="KW-0227">DNA damage</keyword>
<keyword id="KW-0234">DNA repair</keyword>
<keyword id="KW-0235">DNA replication</keyword>
<keyword id="KW-0238">DNA-binding</keyword>
<keyword id="KW-0547">Nucleotide-binding</keyword>
<keyword id="KW-0742">SOS response</keyword>
<accession>B4S937</accession>
<name>RECF_PROA2</name>
<proteinExistence type="inferred from homology"/>
<organism>
    <name type="scientific">Prosthecochloris aestuarii (strain DSM 271 / SK 413)</name>
    <dbReference type="NCBI Taxonomy" id="290512"/>
    <lineage>
        <taxon>Bacteria</taxon>
        <taxon>Pseudomonadati</taxon>
        <taxon>Chlorobiota</taxon>
        <taxon>Chlorobiia</taxon>
        <taxon>Chlorobiales</taxon>
        <taxon>Chlorobiaceae</taxon>
        <taxon>Prosthecochloris</taxon>
    </lineage>
</organism>
<feature type="chain" id="PRO_1000121138" description="DNA replication and repair protein RecF">
    <location>
        <begin position="1"/>
        <end position="370"/>
    </location>
</feature>
<feature type="binding site" evidence="1">
    <location>
        <begin position="30"/>
        <end position="37"/>
    </location>
    <ligand>
        <name>ATP</name>
        <dbReference type="ChEBI" id="CHEBI:30616"/>
    </ligand>
</feature>
<evidence type="ECO:0000255" key="1">
    <source>
        <dbReference type="HAMAP-Rule" id="MF_00365"/>
    </source>
</evidence>
<gene>
    <name evidence="1" type="primary">recF</name>
    <name type="ordered locus">Paes_0003</name>
</gene>